<proteinExistence type="inferred from homology"/>
<dbReference type="EMBL" id="AE008691">
    <property type="protein sequence ID" value="AAM25145.1"/>
    <property type="molecule type" value="Genomic_DNA"/>
</dbReference>
<dbReference type="RefSeq" id="WP_011026101.1">
    <property type="nucleotide sequence ID" value="NC_003869.1"/>
</dbReference>
<dbReference type="SMR" id="Q8R8M9"/>
<dbReference type="STRING" id="273068.TTE1966"/>
<dbReference type="KEGG" id="tte:TTE1966"/>
<dbReference type="eggNOG" id="COG0322">
    <property type="taxonomic scope" value="Bacteria"/>
</dbReference>
<dbReference type="HOGENOM" id="CLU_014841_3_2_9"/>
<dbReference type="OrthoDB" id="9804933at2"/>
<dbReference type="Proteomes" id="UP000000555">
    <property type="component" value="Chromosome"/>
</dbReference>
<dbReference type="GO" id="GO:0005737">
    <property type="term" value="C:cytoplasm"/>
    <property type="evidence" value="ECO:0007669"/>
    <property type="project" value="UniProtKB-SubCell"/>
</dbReference>
<dbReference type="GO" id="GO:0009380">
    <property type="term" value="C:excinuclease repair complex"/>
    <property type="evidence" value="ECO:0007669"/>
    <property type="project" value="InterPro"/>
</dbReference>
<dbReference type="GO" id="GO:0003677">
    <property type="term" value="F:DNA binding"/>
    <property type="evidence" value="ECO:0007669"/>
    <property type="project" value="UniProtKB-UniRule"/>
</dbReference>
<dbReference type="GO" id="GO:0009381">
    <property type="term" value="F:excinuclease ABC activity"/>
    <property type="evidence" value="ECO:0007669"/>
    <property type="project" value="UniProtKB-UniRule"/>
</dbReference>
<dbReference type="GO" id="GO:0006289">
    <property type="term" value="P:nucleotide-excision repair"/>
    <property type="evidence" value="ECO:0007669"/>
    <property type="project" value="UniProtKB-UniRule"/>
</dbReference>
<dbReference type="GO" id="GO:0009432">
    <property type="term" value="P:SOS response"/>
    <property type="evidence" value="ECO:0007669"/>
    <property type="project" value="UniProtKB-UniRule"/>
</dbReference>
<dbReference type="CDD" id="cd10434">
    <property type="entry name" value="GIY-YIG_UvrC_Cho"/>
    <property type="match status" value="1"/>
</dbReference>
<dbReference type="FunFam" id="3.40.1440.10:FF:000001">
    <property type="entry name" value="UvrABC system protein C"/>
    <property type="match status" value="1"/>
</dbReference>
<dbReference type="Gene3D" id="1.10.150.20">
    <property type="entry name" value="5' to 3' exonuclease, C-terminal subdomain"/>
    <property type="match status" value="1"/>
</dbReference>
<dbReference type="Gene3D" id="3.40.1440.10">
    <property type="entry name" value="GIY-YIG endonuclease"/>
    <property type="match status" value="1"/>
</dbReference>
<dbReference type="Gene3D" id="4.10.860.10">
    <property type="entry name" value="UVR domain"/>
    <property type="match status" value="1"/>
</dbReference>
<dbReference type="Gene3D" id="3.30.420.340">
    <property type="entry name" value="UvrC, RNAse H endonuclease domain"/>
    <property type="match status" value="1"/>
</dbReference>
<dbReference type="HAMAP" id="MF_00203">
    <property type="entry name" value="UvrC"/>
    <property type="match status" value="1"/>
</dbReference>
<dbReference type="InterPro" id="IPR000305">
    <property type="entry name" value="GIY-YIG_endonuc"/>
</dbReference>
<dbReference type="InterPro" id="IPR035901">
    <property type="entry name" value="GIY-YIG_endonuc_sf"/>
</dbReference>
<dbReference type="InterPro" id="IPR047296">
    <property type="entry name" value="GIY-YIG_UvrC_Cho"/>
</dbReference>
<dbReference type="InterPro" id="IPR003583">
    <property type="entry name" value="Hlx-hairpin-Hlx_DNA-bd_motif"/>
</dbReference>
<dbReference type="InterPro" id="IPR010994">
    <property type="entry name" value="RuvA_2-like"/>
</dbReference>
<dbReference type="InterPro" id="IPR001943">
    <property type="entry name" value="UVR_dom"/>
</dbReference>
<dbReference type="InterPro" id="IPR036876">
    <property type="entry name" value="UVR_dom_sf"/>
</dbReference>
<dbReference type="InterPro" id="IPR050066">
    <property type="entry name" value="UvrABC_protein_C"/>
</dbReference>
<dbReference type="InterPro" id="IPR004791">
    <property type="entry name" value="UvrC"/>
</dbReference>
<dbReference type="InterPro" id="IPR001162">
    <property type="entry name" value="UvrC_RNase_H_dom"/>
</dbReference>
<dbReference type="InterPro" id="IPR038476">
    <property type="entry name" value="UvrC_RNase_H_dom_sf"/>
</dbReference>
<dbReference type="NCBIfam" id="NF001824">
    <property type="entry name" value="PRK00558.1-5"/>
    <property type="match status" value="1"/>
</dbReference>
<dbReference type="NCBIfam" id="TIGR00194">
    <property type="entry name" value="uvrC"/>
    <property type="match status" value="1"/>
</dbReference>
<dbReference type="PANTHER" id="PTHR30562:SF1">
    <property type="entry name" value="UVRABC SYSTEM PROTEIN C"/>
    <property type="match status" value="1"/>
</dbReference>
<dbReference type="PANTHER" id="PTHR30562">
    <property type="entry name" value="UVRC/OXIDOREDUCTASE"/>
    <property type="match status" value="1"/>
</dbReference>
<dbReference type="Pfam" id="PF01541">
    <property type="entry name" value="GIY-YIG"/>
    <property type="match status" value="1"/>
</dbReference>
<dbReference type="Pfam" id="PF14520">
    <property type="entry name" value="HHH_5"/>
    <property type="match status" value="1"/>
</dbReference>
<dbReference type="Pfam" id="PF02151">
    <property type="entry name" value="UVR"/>
    <property type="match status" value="1"/>
</dbReference>
<dbReference type="Pfam" id="PF22920">
    <property type="entry name" value="UvrC_RNaseH"/>
    <property type="match status" value="1"/>
</dbReference>
<dbReference type="Pfam" id="PF08459">
    <property type="entry name" value="UvrC_RNaseH_dom"/>
    <property type="match status" value="1"/>
</dbReference>
<dbReference type="SMART" id="SM00465">
    <property type="entry name" value="GIYc"/>
    <property type="match status" value="1"/>
</dbReference>
<dbReference type="SMART" id="SM00278">
    <property type="entry name" value="HhH1"/>
    <property type="match status" value="2"/>
</dbReference>
<dbReference type="SUPFAM" id="SSF46600">
    <property type="entry name" value="C-terminal UvrC-binding domain of UvrB"/>
    <property type="match status" value="1"/>
</dbReference>
<dbReference type="SUPFAM" id="SSF82771">
    <property type="entry name" value="GIY-YIG endonuclease"/>
    <property type="match status" value="1"/>
</dbReference>
<dbReference type="SUPFAM" id="SSF47781">
    <property type="entry name" value="RuvA domain 2-like"/>
    <property type="match status" value="1"/>
</dbReference>
<dbReference type="PROSITE" id="PS50164">
    <property type="entry name" value="GIY_YIG"/>
    <property type="match status" value="1"/>
</dbReference>
<dbReference type="PROSITE" id="PS50151">
    <property type="entry name" value="UVR"/>
    <property type="match status" value="1"/>
</dbReference>
<dbReference type="PROSITE" id="PS50165">
    <property type="entry name" value="UVRC"/>
    <property type="match status" value="1"/>
</dbReference>
<protein>
    <recommendedName>
        <fullName evidence="1">UvrABC system protein C</fullName>
        <shortName evidence="1">Protein UvrC</shortName>
    </recommendedName>
    <alternativeName>
        <fullName evidence="1">Excinuclease ABC subunit C</fullName>
    </alternativeName>
</protein>
<evidence type="ECO:0000255" key="1">
    <source>
        <dbReference type="HAMAP-Rule" id="MF_00203"/>
    </source>
</evidence>
<gene>
    <name evidence="1" type="primary">uvrC</name>
    <name type="ordered locus">TTE1966</name>
</gene>
<comment type="function">
    <text evidence="1">The UvrABC repair system catalyzes the recognition and processing of DNA lesions. UvrC both incises the 5' and 3' sides of the lesion. The N-terminal half is responsible for the 3' incision and the C-terminal half is responsible for the 5' incision.</text>
</comment>
<comment type="subunit">
    <text evidence="1">Interacts with UvrB in an incision complex.</text>
</comment>
<comment type="subcellular location">
    <subcellularLocation>
        <location evidence="1">Cytoplasm</location>
    </subcellularLocation>
</comment>
<comment type="similarity">
    <text evidence="1">Belongs to the UvrC family.</text>
</comment>
<reference key="1">
    <citation type="journal article" date="2002" name="Genome Res.">
        <title>A complete sequence of the T. tengcongensis genome.</title>
        <authorList>
            <person name="Bao Q."/>
            <person name="Tian Y."/>
            <person name="Li W."/>
            <person name="Xu Z."/>
            <person name="Xuan Z."/>
            <person name="Hu S."/>
            <person name="Dong W."/>
            <person name="Yang J."/>
            <person name="Chen Y."/>
            <person name="Xue Y."/>
            <person name="Xu Y."/>
            <person name="Lai X."/>
            <person name="Huang L."/>
            <person name="Dong X."/>
            <person name="Ma Y."/>
            <person name="Ling L."/>
            <person name="Tan H."/>
            <person name="Chen R."/>
            <person name="Wang J."/>
            <person name="Yu J."/>
            <person name="Yang H."/>
        </authorList>
    </citation>
    <scope>NUCLEOTIDE SEQUENCE [LARGE SCALE GENOMIC DNA]</scope>
    <source>
        <strain>DSM 15242 / JCM 11007 / NBRC 100824 / MB4</strain>
    </source>
</reference>
<organism>
    <name type="scientific">Caldanaerobacter subterraneus subsp. tengcongensis (strain DSM 15242 / JCM 11007 / NBRC 100824 / MB4)</name>
    <name type="common">Thermoanaerobacter tengcongensis</name>
    <dbReference type="NCBI Taxonomy" id="273068"/>
    <lineage>
        <taxon>Bacteria</taxon>
        <taxon>Bacillati</taxon>
        <taxon>Bacillota</taxon>
        <taxon>Clostridia</taxon>
        <taxon>Thermoanaerobacterales</taxon>
        <taxon>Thermoanaerobacteraceae</taxon>
        <taxon>Caldanaerobacter</taxon>
    </lineage>
</organism>
<accession>Q8R8M9</accession>
<keyword id="KW-0963">Cytoplasm</keyword>
<keyword id="KW-0227">DNA damage</keyword>
<keyword id="KW-0228">DNA excision</keyword>
<keyword id="KW-0234">DNA repair</keyword>
<keyword id="KW-0267">Excision nuclease</keyword>
<keyword id="KW-1185">Reference proteome</keyword>
<keyword id="KW-0742">SOS response</keyword>
<name>UVRC_CALS4</name>
<feature type="chain" id="PRO_0000138355" description="UvrABC system protein C">
    <location>
        <begin position="1"/>
        <end position="617"/>
    </location>
</feature>
<feature type="domain" description="GIY-YIG" evidence="1">
    <location>
        <begin position="12"/>
        <end position="91"/>
    </location>
</feature>
<feature type="domain" description="UVR" evidence="1">
    <location>
        <begin position="203"/>
        <end position="238"/>
    </location>
</feature>
<sequence length="617" mass="71487">MDLQEKLKLLPEKPGVYLMKDEEGNIIYVGKASVLKNRVRQYFQNTDNHPPKVKVMLSHVEDFEYIVTDTELEALMLECNLIKKYKPKYNVLLKDDKNYPYIKITVAEDYPRIMFTRKIDMDGSKYFGPYGSAFAVRETIKLVRKMFPIRTCNVNIEKSLGKVRECLYYHIGLCSAPCTGRIEKEEYRKLVDQAVMFLEGKREWLVEKLKEEMQKAADELRFEEAARLRDQIFAIEKISEKQKVTSINEDEQDVISMARSDDIAHIEVFFVREGKLSGREHYYMKNTEGMGREEIISSFIKQFYESSPSVPKEIIIDVELEEKDLLEDWLSQKRGNRVSITVPLRGKKKELVDMVYQNAVEALKNEILAREKILKDPAVLELSNLLGIEYPKRIEAYDISNVRGEDNVGSMVVFVDGKPKKSEYRKFTIKYVEGQDDYQSMREMIERRFLHALEEKKQIEEGTLSKEKAKFIEMPDLILVDGGIGHVNAALEVIEKLGISVPVYGMVKDSRHRTRGLVGVSGEVQMPVTGRAFRLVAQIQEEAHRFAITFHRERQSKRFKTDLLNIKGIGEKRAKVLYEAFGSIEEIKKASLEELKKVKGMNERSAKAVYEYFHGEV</sequence>